<keyword id="KW-1185">Reference proteome</keyword>
<keyword id="KW-0687">Ribonucleoprotein</keyword>
<keyword id="KW-0689">Ribosomal protein</keyword>
<reference key="1">
    <citation type="journal article" date="2008" name="J. Bacteriol.">
        <title>Genome sequence of the chemolithoautotrophic bacterium Oligotropha carboxidovorans OM5T.</title>
        <authorList>
            <person name="Paul D."/>
            <person name="Bridges S."/>
            <person name="Burgess S.C."/>
            <person name="Dandass Y."/>
            <person name="Lawrence M.L."/>
        </authorList>
    </citation>
    <scope>NUCLEOTIDE SEQUENCE [LARGE SCALE GENOMIC DNA]</scope>
    <source>
        <strain>ATCC 49405 / DSM 1227 / KCTC 32145 / OM5</strain>
    </source>
</reference>
<reference key="2">
    <citation type="journal article" date="2011" name="J. Bacteriol.">
        <title>Complete genome sequences of the chemolithoautotrophic Oligotropha carboxidovorans strains OM4 and OM5.</title>
        <authorList>
            <person name="Volland S."/>
            <person name="Rachinger M."/>
            <person name="Strittmatter A."/>
            <person name="Daniel R."/>
            <person name="Gottschalk G."/>
            <person name="Meyer O."/>
        </authorList>
    </citation>
    <scope>NUCLEOTIDE SEQUENCE [LARGE SCALE GENOMIC DNA]</scope>
    <source>
        <strain>ATCC 49405 / DSM 1227 / KCTC 32145 / OM5</strain>
    </source>
</reference>
<feature type="chain" id="PRO_1000115038" description="Small ribosomal subunit protein uS2">
    <location>
        <begin position="1"/>
        <end position="332"/>
    </location>
</feature>
<accession>B6JH66</accession>
<accession>F8BWK7</accession>
<sequence length="332" mass="35821">MALPDFTMRQLLEAGVHFGHQAHRWNPKMADFIFGARNNIHIIDLAQTVPLMHRALQAVSDTVAKGGRILFVGTKRQAQDGVADAAKRSAQYFVNSRWLGGTLTNWKTVSGSIRRLRQLEEMLGSAEGSQYTKKERLTLQRERDKLDRSLGGIKDMGGLPDLIFVIDTNKEDIAIQEAQRLGIPVAAIVDTNCDPKGITYVVPGNDDAGRAIALYCDLIARAAIDGISRAQGDAGIDVGALAAPPQEDAVEASKTEGFQGLAGPRGVADDLKKLSGVSGAIEKKLNDLGIFHYWQIAELDSATAHKIGEEVGLPARVDGWVSQSKSLTADAE</sequence>
<gene>
    <name evidence="1" type="primary">rpsB</name>
    <name type="ordered locus">OCAR_5955</name>
    <name type="ordered locus">OCA5_c20680</name>
</gene>
<evidence type="ECO:0000255" key="1">
    <source>
        <dbReference type="HAMAP-Rule" id="MF_00291"/>
    </source>
</evidence>
<evidence type="ECO:0000305" key="2"/>
<proteinExistence type="inferred from homology"/>
<organism>
    <name type="scientific">Afipia carboxidovorans (strain ATCC 49405 / DSM 1227 / KCTC 32145 / OM5)</name>
    <name type="common">Oligotropha carboxidovorans</name>
    <dbReference type="NCBI Taxonomy" id="504832"/>
    <lineage>
        <taxon>Bacteria</taxon>
        <taxon>Pseudomonadati</taxon>
        <taxon>Pseudomonadota</taxon>
        <taxon>Alphaproteobacteria</taxon>
        <taxon>Hyphomicrobiales</taxon>
        <taxon>Nitrobacteraceae</taxon>
        <taxon>Afipia</taxon>
    </lineage>
</organism>
<comment type="similarity">
    <text evidence="1">Belongs to the universal ribosomal protein uS2 family.</text>
</comment>
<protein>
    <recommendedName>
        <fullName evidence="1">Small ribosomal subunit protein uS2</fullName>
    </recommendedName>
    <alternativeName>
        <fullName evidence="2">30S ribosomal protein S2</fullName>
    </alternativeName>
</protein>
<dbReference type="EMBL" id="CP001196">
    <property type="protein sequence ID" value="ACI93076.1"/>
    <property type="molecule type" value="Genomic_DNA"/>
</dbReference>
<dbReference type="EMBL" id="CP002826">
    <property type="protein sequence ID" value="AEI06775.1"/>
    <property type="molecule type" value="Genomic_DNA"/>
</dbReference>
<dbReference type="RefSeq" id="WP_012563103.1">
    <property type="nucleotide sequence ID" value="NC_015684.1"/>
</dbReference>
<dbReference type="SMR" id="B6JH66"/>
<dbReference type="STRING" id="504832.OCA5_c20680"/>
<dbReference type="KEGG" id="oca:OCAR_5955"/>
<dbReference type="KEGG" id="ocg:OCA5_c20680"/>
<dbReference type="PATRIC" id="fig|504832.7.peg.2189"/>
<dbReference type="eggNOG" id="COG0052">
    <property type="taxonomic scope" value="Bacteria"/>
</dbReference>
<dbReference type="HOGENOM" id="CLU_040318_2_1_5"/>
<dbReference type="OrthoDB" id="9808036at2"/>
<dbReference type="Proteomes" id="UP000007730">
    <property type="component" value="Chromosome"/>
</dbReference>
<dbReference type="GO" id="GO:0022627">
    <property type="term" value="C:cytosolic small ribosomal subunit"/>
    <property type="evidence" value="ECO:0007669"/>
    <property type="project" value="TreeGrafter"/>
</dbReference>
<dbReference type="GO" id="GO:0003735">
    <property type="term" value="F:structural constituent of ribosome"/>
    <property type="evidence" value="ECO:0007669"/>
    <property type="project" value="InterPro"/>
</dbReference>
<dbReference type="GO" id="GO:0006412">
    <property type="term" value="P:translation"/>
    <property type="evidence" value="ECO:0007669"/>
    <property type="project" value="UniProtKB-UniRule"/>
</dbReference>
<dbReference type="CDD" id="cd01425">
    <property type="entry name" value="RPS2"/>
    <property type="match status" value="1"/>
</dbReference>
<dbReference type="FunFam" id="1.10.287.610:FF:000001">
    <property type="entry name" value="30S ribosomal protein S2"/>
    <property type="match status" value="1"/>
</dbReference>
<dbReference type="Gene3D" id="3.40.50.10490">
    <property type="entry name" value="Glucose-6-phosphate isomerase like protein, domain 1"/>
    <property type="match status" value="1"/>
</dbReference>
<dbReference type="Gene3D" id="1.10.287.610">
    <property type="entry name" value="Helix hairpin bin"/>
    <property type="match status" value="1"/>
</dbReference>
<dbReference type="HAMAP" id="MF_00291_B">
    <property type="entry name" value="Ribosomal_uS2_B"/>
    <property type="match status" value="1"/>
</dbReference>
<dbReference type="InterPro" id="IPR001865">
    <property type="entry name" value="Ribosomal_uS2"/>
</dbReference>
<dbReference type="InterPro" id="IPR005706">
    <property type="entry name" value="Ribosomal_uS2_bac/mit/plastid"/>
</dbReference>
<dbReference type="InterPro" id="IPR018130">
    <property type="entry name" value="Ribosomal_uS2_CS"/>
</dbReference>
<dbReference type="InterPro" id="IPR023591">
    <property type="entry name" value="Ribosomal_uS2_flav_dom_sf"/>
</dbReference>
<dbReference type="NCBIfam" id="NF008966">
    <property type="entry name" value="PRK12311.1"/>
    <property type="match status" value="1"/>
</dbReference>
<dbReference type="NCBIfam" id="TIGR01011">
    <property type="entry name" value="rpsB_bact"/>
    <property type="match status" value="1"/>
</dbReference>
<dbReference type="PANTHER" id="PTHR12534">
    <property type="entry name" value="30S RIBOSOMAL PROTEIN S2 PROKARYOTIC AND ORGANELLAR"/>
    <property type="match status" value="1"/>
</dbReference>
<dbReference type="PANTHER" id="PTHR12534:SF0">
    <property type="entry name" value="SMALL RIBOSOMAL SUBUNIT PROTEIN US2M"/>
    <property type="match status" value="1"/>
</dbReference>
<dbReference type="Pfam" id="PF00318">
    <property type="entry name" value="Ribosomal_S2"/>
    <property type="match status" value="1"/>
</dbReference>
<dbReference type="PRINTS" id="PR00395">
    <property type="entry name" value="RIBOSOMALS2"/>
</dbReference>
<dbReference type="SUPFAM" id="SSF52313">
    <property type="entry name" value="Ribosomal protein S2"/>
    <property type="match status" value="1"/>
</dbReference>
<dbReference type="PROSITE" id="PS00962">
    <property type="entry name" value="RIBOSOMAL_S2_1"/>
    <property type="match status" value="1"/>
</dbReference>
<dbReference type="PROSITE" id="PS00963">
    <property type="entry name" value="RIBOSOMAL_S2_2"/>
    <property type="match status" value="1"/>
</dbReference>
<name>RS2_AFIC5</name>